<organism>
    <name type="scientific">Methanosphaerula palustris (strain ATCC BAA-1556 / DSM 19958 / E1-9c)</name>
    <dbReference type="NCBI Taxonomy" id="521011"/>
    <lineage>
        <taxon>Archaea</taxon>
        <taxon>Methanobacteriati</taxon>
        <taxon>Methanobacteriota</taxon>
        <taxon>Stenosarchaea group</taxon>
        <taxon>Methanomicrobia</taxon>
        <taxon>Methanomicrobiales</taxon>
        <taxon>Methanoregulaceae</taxon>
        <taxon>Methanosphaerula</taxon>
    </lineage>
</organism>
<keyword id="KW-0004">4Fe-4S</keyword>
<keyword id="KW-0408">Iron</keyword>
<keyword id="KW-0411">Iron-sulfur</keyword>
<keyword id="KW-0479">Metal-binding</keyword>
<keyword id="KW-1185">Reference proteome</keyword>
<keyword id="KW-0949">S-adenosyl-L-methionine</keyword>
<keyword id="KW-0808">Transferase</keyword>
<name>COFH_METPE</name>
<dbReference type="EC" id="2.5.1.147"/>
<dbReference type="EMBL" id="CP001338">
    <property type="protein sequence ID" value="ACL15445.1"/>
    <property type="molecule type" value="Genomic_DNA"/>
</dbReference>
<dbReference type="RefSeq" id="WP_012616764.1">
    <property type="nucleotide sequence ID" value="NC_011832.1"/>
</dbReference>
<dbReference type="SMR" id="B8GI94"/>
<dbReference type="STRING" id="521011.Mpal_0050"/>
<dbReference type="GeneID" id="7272219"/>
<dbReference type="KEGG" id="mpl:Mpal_0050"/>
<dbReference type="eggNOG" id="arCOG00656">
    <property type="taxonomic scope" value="Archaea"/>
</dbReference>
<dbReference type="HOGENOM" id="CLU_040406_1_0_2"/>
<dbReference type="OrthoDB" id="8186at2157"/>
<dbReference type="UniPathway" id="UPA00072"/>
<dbReference type="Proteomes" id="UP000002457">
    <property type="component" value="Chromosome"/>
</dbReference>
<dbReference type="GO" id="GO:0051539">
    <property type="term" value="F:4 iron, 4 sulfur cluster binding"/>
    <property type="evidence" value="ECO:0007669"/>
    <property type="project" value="UniProtKB-KW"/>
</dbReference>
<dbReference type="GO" id="GO:0141093">
    <property type="term" value="F:5-amino-6-(D-ribitylamino)uracil--L-tyrosine 4-hydroxyphenyl transferase activity"/>
    <property type="evidence" value="ECO:0007669"/>
    <property type="project" value="UniProtKB-EC"/>
</dbReference>
<dbReference type="GO" id="GO:0044689">
    <property type="term" value="F:7,8-didemethyl-8-hydroxy-5-deazariboflavin synthase activity"/>
    <property type="evidence" value="ECO:0007669"/>
    <property type="project" value="TreeGrafter"/>
</dbReference>
<dbReference type="GO" id="GO:0005506">
    <property type="term" value="F:iron ion binding"/>
    <property type="evidence" value="ECO:0007669"/>
    <property type="project" value="UniProtKB-UniRule"/>
</dbReference>
<dbReference type="CDD" id="cd01335">
    <property type="entry name" value="Radical_SAM"/>
    <property type="match status" value="1"/>
</dbReference>
<dbReference type="Gene3D" id="3.20.20.70">
    <property type="entry name" value="Aldolase class I"/>
    <property type="match status" value="1"/>
</dbReference>
<dbReference type="InterPro" id="IPR013785">
    <property type="entry name" value="Aldolase_TIM"/>
</dbReference>
<dbReference type="InterPro" id="IPR045567">
    <property type="entry name" value="CofH/MnqC-like_C"/>
</dbReference>
<dbReference type="InterPro" id="IPR019940">
    <property type="entry name" value="CofH_family"/>
</dbReference>
<dbReference type="InterPro" id="IPR006638">
    <property type="entry name" value="Elp3/MiaA/NifB-like_rSAM"/>
</dbReference>
<dbReference type="InterPro" id="IPR034405">
    <property type="entry name" value="F420"/>
</dbReference>
<dbReference type="InterPro" id="IPR020050">
    <property type="entry name" value="FO_synthase_su2"/>
</dbReference>
<dbReference type="InterPro" id="IPR007197">
    <property type="entry name" value="rSAM"/>
</dbReference>
<dbReference type="NCBIfam" id="TIGR00423">
    <property type="entry name" value="CofH family radical SAM protein"/>
    <property type="match status" value="1"/>
</dbReference>
<dbReference type="NCBIfam" id="TIGR03551">
    <property type="entry name" value="F420_cofH"/>
    <property type="match status" value="1"/>
</dbReference>
<dbReference type="NCBIfam" id="NF005609">
    <property type="entry name" value="PRK07360.1"/>
    <property type="match status" value="1"/>
</dbReference>
<dbReference type="PANTHER" id="PTHR43076">
    <property type="entry name" value="FO SYNTHASE (COFH)"/>
    <property type="match status" value="1"/>
</dbReference>
<dbReference type="PANTHER" id="PTHR43076:SF1">
    <property type="entry name" value="LIPOYL SYNTHASE 2"/>
    <property type="match status" value="1"/>
</dbReference>
<dbReference type="Pfam" id="PF19288">
    <property type="entry name" value="CofH_C"/>
    <property type="match status" value="1"/>
</dbReference>
<dbReference type="Pfam" id="PF04055">
    <property type="entry name" value="Radical_SAM"/>
    <property type="match status" value="1"/>
</dbReference>
<dbReference type="PIRSF" id="PIRSF004762">
    <property type="entry name" value="CHP00423"/>
    <property type="match status" value="1"/>
</dbReference>
<dbReference type="SFLD" id="SFLDF00293">
    <property type="entry name" value="((2_3_4_5-tetrahydroxypentyl)a"/>
    <property type="match status" value="1"/>
</dbReference>
<dbReference type="SFLD" id="SFLDG01064">
    <property type="entry name" value="F420__menaquinone_cofactor_bio"/>
    <property type="match status" value="1"/>
</dbReference>
<dbReference type="SFLD" id="SFLDG01389">
    <property type="entry name" value="menaquinone_synthsis_involved"/>
    <property type="match status" value="1"/>
</dbReference>
<dbReference type="SMART" id="SM00729">
    <property type="entry name" value="Elp3"/>
    <property type="match status" value="1"/>
</dbReference>
<dbReference type="SUPFAM" id="SSF102114">
    <property type="entry name" value="Radical SAM enzymes"/>
    <property type="match status" value="1"/>
</dbReference>
<dbReference type="PROSITE" id="PS51918">
    <property type="entry name" value="RADICAL_SAM"/>
    <property type="match status" value="1"/>
</dbReference>
<feature type="chain" id="PRO_1000215710" description="5-amino-6-(D-ribitylamino)uracil--L-tyrosine 4-hydroxyphenyl transferase">
    <location>
        <begin position="1"/>
        <end position="365"/>
    </location>
</feature>
<feature type="domain" description="Radical SAM core" evidence="2">
    <location>
        <begin position="56"/>
        <end position="290"/>
    </location>
</feature>
<feature type="binding site" evidence="1">
    <location>
        <position position="70"/>
    </location>
    <ligand>
        <name>[4Fe-4S] cluster</name>
        <dbReference type="ChEBI" id="CHEBI:49883"/>
        <note>4Fe-4S-S-AdoMet</note>
    </ligand>
</feature>
<feature type="binding site" evidence="1">
    <location>
        <position position="74"/>
    </location>
    <ligand>
        <name>[4Fe-4S] cluster</name>
        <dbReference type="ChEBI" id="CHEBI:49883"/>
        <note>4Fe-4S-S-AdoMet</note>
    </ligand>
</feature>
<feature type="binding site" evidence="1">
    <location>
        <position position="77"/>
    </location>
    <ligand>
        <name>[4Fe-4S] cluster</name>
        <dbReference type="ChEBI" id="CHEBI:49883"/>
        <note>4Fe-4S-S-AdoMet</note>
    </ligand>
</feature>
<gene>
    <name type="primary">cofH</name>
    <name type="ordered locus">Mpal_0050</name>
</gene>
<sequence length="365" mass="40298">MRTMNHDLQGLLSDLKGGHRLGEDEALMLFETRGRDIWTIAAAADERREAVAGDPVTYVRNQNINVTNLCVNACGFCGFSKKPGDDGIYYHSREEIQQKAALAKSRGVSEICTVSGLHPHFTAESYIEIYRWITEAAPGIHLHASNPMEVAYGAERSGMTTREVLTGMKAAGLSSMCGTAAEILVDPVRDTICRGKIPTDEWVRIIREAHSLGIPTTATIMYGHCETEADRVRHLAILRAIQDETHGFTEFVPLSFIHMNTPIYRQGLARAGATGREDLLMVAVARLFLDNFRNIQVSWVKEGIKMAQLGLIAGANDLGGTMYEESISKGAGATNTDYLDPAEMQRVAEDLGRMLERRTTLYDMC</sequence>
<accession>B8GI94</accession>
<reference key="1">
    <citation type="journal article" date="2015" name="Genome Announc.">
        <title>Complete Genome Sequence of Methanosphaerula palustris E1-9CT, a Hydrogenotrophic Methanogen Isolated from a Minerotrophic Fen Peatland.</title>
        <authorList>
            <person name="Cadillo-Quiroz H."/>
            <person name="Browne P."/>
            <person name="Kyrpides N."/>
            <person name="Woyke T."/>
            <person name="Goodwin L."/>
            <person name="Detter C."/>
            <person name="Yavitt J.B."/>
            <person name="Zinder S.H."/>
        </authorList>
    </citation>
    <scope>NUCLEOTIDE SEQUENCE [LARGE SCALE GENOMIC DNA]</scope>
    <source>
        <strain>ATCC BAA-1556 / DSM 19958 / E1-9c</strain>
    </source>
</reference>
<protein>
    <recommendedName>
        <fullName>5-amino-6-(D-ribitylamino)uracil--L-tyrosine 4-hydroxyphenyl transferase</fullName>
        <ecNumber>2.5.1.147</ecNumber>
    </recommendedName>
    <alternativeName>
        <fullName>FO synthase subunit 2</fullName>
    </alternativeName>
</protein>
<proteinExistence type="inferred from homology"/>
<evidence type="ECO:0000250" key="1"/>
<evidence type="ECO:0000255" key="2">
    <source>
        <dbReference type="PROSITE-ProRule" id="PRU01266"/>
    </source>
</evidence>
<evidence type="ECO:0000305" key="3"/>
<comment type="function">
    <text>Catalyzes the radical-mediated synthesis of 5-amino-5-(4-hydroxybenzyl)-6-(D-ribitylimino)-5,6-dihydrouracil from 5-amino-6-(D-ribitylamino)uracil and L-tyrosine.</text>
</comment>
<comment type="catalytic activity">
    <reaction>
        <text>5-amino-6-(D-ribitylamino)uracil + L-tyrosine + S-adenosyl-L-methionine = 5-amino-5-(4-hydroxybenzyl)-6-(D-ribitylimino)-5,6-dihydrouracil + 2-iminoacetate + 5'-deoxyadenosine + L-methionine + H(+)</text>
        <dbReference type="Rhea" id="RHEA:55200"/>
        <dbReference type="ChEBI" id="CHEBI:15378"/>
        <dbReference type="ChEBI" id="CHEBI:15934"/>
        <dbReference type="ChEBI" id="CHEBI:17319"/>
        <dbReference type="ChEBI" id="CHEBI:57844"/>
        <dbReference type="ChEBI" id="CHEBI:58315"/>
        <dbReference type="ChEBI" id="CHEBI:59789"/>
        <dbReference type="ChEBI" id="CHEBI:77846"/>
        <dbReference type="ChEBI" id="CHEBI:85936"/>
        <dbReference type="EC" id="2.5.1.147"/>
    </reaction>
</comment>
<comment type="cofactor">
    <cofactor evidence="1">
        <name>[4Fe-4S] cluster</name>
        <dbReference type="ChEBI" id="CHEBI:49883"/>
    </cofactor>
    <text evidence="1">Binds 1 [4Fe-4S] cluster. The cluster is coordinated with 3 cysteines and an exchangeable S-adenosyl-L-methionine.</text>
</comment>
<comment type="pathway">
    <text>Cofactor biosynthesis; coenzyme F0 biosynthesis.</text>
</comment>
<comment type="subunit">
    <text evidence="1">Consists of two subunits, CofG and CofH.</text>
</comment>
<comment type="similarity">
    <text evidence="3">Belongs to the radical SAM superfamily. CofH family.</text>
</comment>